<protein>
    <recommendedName>
        <fullName evidence="4">Cytochrome P450 monooxygenase pyvB</fullName>
        <ecNumber evidence="6">1.14.14.-</ecNumber>
    </recommendedName>
    <alternativeName>
        <fullName evidence="4">Pyranoviolin A biosynthesis cluster protein B</fullName>
    </alternativeName>
</protein>
<dbReference type="EC" id="1.14.14.-" evidence="6"/>
<dbReference type="EMBL" id="BR001648">
    <property type="protein sequence ID" value="FAA01292.1"/>
    <property type="molecule type" value="Genomic_DNA"/>
</dbReference>
<dbReference type="EMBL" id="KZ825234">
    <property type="protein sequence ID" value="PYI13693.1"/>
    <property type="molecule type" value="Genomic_DNA"/>
</dbReference>
<dbReference type="SMR" id="A0A2V5GZ95"/>
<dbReference type="STRING" id="1450538.A0A2V5GZ95"/>
<dbReference type="OMA" id="PYLTHHD"/>
<dbReference type="Proteomes" id="UP000249829">
    <property type="component" value="Unassembled WGS sequence"/>
</dbReference>
<dbReference type="GO" id="GO:0016020">
    <property type="term" value="C:membrane"/>
    <property type="evidence" value="ECO:0007669"/>
    <property type="project" value="UniProtKB-SubCell"/>
</dbReference>
<dbReference type="GO" id="GO:0020037">
    <property type="term" value="F:heme binding"/>
    <property type="evidence" value="ECO:0007669"/>
    <property type="project" value="InterPro"/>
</dbReference>
<dbReference type="GO" id="GO:0005506">
    <property type="term" value="F:iron ion binding"/>
    <property type="evidence" value="ECO:0007669"/>
    <property type="project" value="InterPro"/>
</dbReference>
<dbReference type="GO" id="GO:0004497">
    <property type="term" value="F:monooxygenase activity"/>
    <property type="evidence" value="ECO:0007669"/>
    <property type="project" value="UniProtKB-KW"/>
</dbReference>
<dbReference type="GO" id="GO:0016705">
    <property type="term" value="F:oxidoreductase activity, acting on paired donors, with incorporation or reduction of molecular oxygen"/>
    <property type="evidence" value="ECO:0007669"/>
    <property type="project" value="InterPro"/>
</dbReference>
<dbReference type="Gene3D" id="1.10.630.10">
    <property type="entry name" value="Cytochrome P450"/>
    <property type="match status" value="1"/>
</dbReference>
<dbReference type="InterPro" id="IPR050529">
    <property type="entry name" value="CYP450_sterol_14alpha_dmase"/>
</dbReference>
<dbReference type="InterPro" id="IPR001128">
    <property type="entry name" value="Cyt_P450"/>
</dbReference>
<dbReference type="InterPro" id="IPR017972">
    <property type="entry name" value="Cyt_P450_CS"/>
</dbReference>
<dbReference type="InterPro" id="IPR002403">
    <property type="entry name" value="Cyt_P450_E_grp-IV"/>
</dbReference>
<dbReference type="InterPro" id="IPR036396">
    <property type="entry name" value="Cyt_P450_sf"/>
</dbReference>
<dbReference type="PANTHER" id="PTHR24304:SF2">
    <property type="entry name" value="24-HYDROXYCHOLESTEROL 7-ALPHA-HYDROXYLASE"/>
    <property type="match status" value="1"/>
</dbReference>
<dbReference type="PANTHER" id="PTHR24304">
    <property type="entry name" value="CYTOCHROME P450 FAMILY 7"/>
    <property type="match status" value="1"/>
</dbReference>
<dbReference type="Pfam" id="PF00067">
    <property type="entry name" value="p450"/>
    <property type="match status" value="1"/>
</dbReference>
<dbReference type="PRINTS" id="PR00465">
    <property type="entry name" value="EP450IV"/>
</dbReference>
<dbReference type="SUPFAM" id="SSF48264">
    <property type="entry name" value="Cytochrome P450"/>
    <property type="match status" value="1"/>
</dbReference>
<dbReference type="PROSITE" id="PS00086">
    <property type="entry name" value="CYTOCHROME_P450"/>
    <property type="match status" value="1"/>
</dbReference>
<accession>A0A2V5GZ95</accession>
<accession>A0A7M4B2W8</accession>
<keyword id="KW-0349">Heme</keyword>
<keyword id="KW-0408">Iron</keyword>
<keyword id="KW-0472">Membrane</keyword>
<keyword id="KW-0479">Metal-binding</keyword>
<keyword id="KW-0503">Monooxygenase</keyword>
<keyword id="KW-0560">Oxidoreductase</keyword>
<keyword id="KW-1185">Reference proteome</keyword>
<keyword id="KW-0812">Transmembrane</keyword>
<keyword id="KW-1133">Transmembrane helix</keyword>
<proteinExistence type="inferred from homology"/>
<sequence length="487" mass="55126">MIASHLLSPLIFLEQQPAYSSVVIGALVVCLVCLVWPTESAKRAPPAPNFGVPRIGDAAAFLADPVSFVQKATQKCGSIFQIKLLVANLVYLRGVKLNRMYTDVKEDTWSFGGGIGLFLRKIAKPGYFDHLRTLVNSLNRGVNRKAALEHYFQLIEEEAGKALQGWSQRGAVPVFEETSRFVHRVIVRCLMGQDFYDHRLDELYEILHHMEADIGHPFNLLLPDWIPHPAARRLEQNRDRFAQIFEQQVADRRRNPEIWRDSLDYISFTLEDPRTAHLEGYLPSHHTVLMFAAHTSTVASISWTILELLRNPDYLAQLRQSLAAHPDARKCPELLAGIKETGRHYSGVHMFRTTHRAVELEGGKYLVPPNWIVSISPYLTHHDPEIFHTPQHWIPERWLQPDDRMQNLNNPREAAFLQFGAGCHRCPGEALAGIIAQGLLATLVRRYDMVWGKEGPPTDLTALDFSKVGSPWLEGDASIAIRPKVAE</sequence>
<name>PYVB_ASPV1</name>
<gene>
    <name evidence="4" type="primary">pyvB</name>
    <name type="ORF">BO99DRAFT_407314</name>
</gene>
<comment type="function">
    <text evidence="3 6">Cytochrome P450 monooxygenase; part of the gene cluster that mediates the biosynthesis of pyranoviolin A, a pyranonigrin analog with a C-3 methoxy group (PubMed:33117309). Initially, the PKS portion of pyvA synthesizes C-10 carbon chain from 5 molecules of malonyl-CoA, which is then condensed with the thiolation (T) domain-bound glycine activated by the adenylation (A) domain (PubMed:33117309). The subsequent chain release by Dieckmann condensation (DKC) could be catalyzed by the TE domain present at the C-terminus of pyvA and/or the alpha/beta hydrolase pyvD, installing the tetramic acid moiety (Probable). The FAD-dependent monooxygenase pyvC next epoxidizes one of the olefins of the polyketide part, and the epoxide ring-opening induces the dihydro-gamma-pyrone ring formation (Probable). The cytochrome P450 monooxygeanse pyvB would be responsible for the 2 consecutive reactions, in which the dihydro-gamma-pyrone is oxidized to gamma-pyrone and C-7 is hydroxylated to yield pyranonigrin F (Probable). Finally, the O-methyltransferase pyvH methylates the C-3 hydroxy group to complete the biosynthesis (Probable).</text>
</comment>
<comment type="cofactor">
    <cofactor evidence="1">
        <name>heme</name>
        <dbReference type="ChEBI" id="CHEBI:30413"/>
    </cofactor>
</comment>
<comment type="pathway">
    <text evidence="6">Secondary metabolite biosynthesis.</text>
</comment>
<comment type="subcellular location">
    <subcellularLocation>
        <location evidence="2">Membrane</location>
        <topology evidence="2">Single-pass membrane protein</topology>
    </subcellularLocation>
</comment>
<comment type="similarity">
    <text evidence="5">Belongs to the cytochrome P450 family.</text>
</comment>
<evidence type="ECO:0000250" key="1">
    <source>
        <dbReference type="UniProtKB" id="P04798"/>
    </source>
</evidence>
<evidence type="ECO:0000255" key="2"/>
<evidence type="ECO:0000269" key="3">
    <source>
    </source>
</evidence>
<evidence type="ECO:0000303" key="4">
    <source>
    </source>
</evidence>
<evidence type="ECO:0000305" key="5"/>
<evidence type="ECO:0000305" key="6">
    <source>
    </source>
</evidence>
<feature type="chain" id="PRO_0000452817" description="Cytochrome P450 monooxygenase pyvB">
    <location>
        <begin position="1"/>
        <end position="487"/>
    </location>
</feature>
<feature type="transmembrane region" description="Helical" evidence="2">
    <location>
        <begin position="17"/>
        <end position="37"/>
    </location>
</feature>
<feature type="binding site" description="axial binding residue" evidence="1">
    <location>
        <position position="426"/>
    </location>
    <ligand>
        <name>heme</name>
        <dbReference type="ChEBI" id="CHEBI:30413"/>
    </ligand>
    <ligandPart>
        <name>Fe</name>
        <dbReference type="ChEBI" id="CHEBI:18248"/>
    </ligandPart>
</feature>
<reference key="1">
    <citation type="journal article" date="2020" name="Front. Microbiol.">
        <title>Discovery of pyranoviolin A and its biosynthetic gene cluster in Aspergillus violaceofuscus.</title>
        <authorList>
            <person name="Wei X."/>
            <person name="Chen L."/>
            <person name="Tang J.W."/>
            <person name="Matsuda Y."/>
        </authorList>
    </citation>
    <scope>NUCLEOTIDE SEQUENCE [GENOMIC DNA]</scope>
    <scope>FUNCTION</scope>
    <scope>PATHWAY</scope>
</reference>
<reference key="2">
    <citation type="submission" date="2018-02" db="EMBL/GenBank/DDBJ databases">
        <title>The genomes of Aspergillus section Nigri reveals drivers in fungal speciation.</title>
        <authorList>
            <consortium name="DOE Joint Genome Institute"/>
            <person name="Vesth T.C."/>
            <person name="Nybo J."/>
            <person name="Theobald S."/>
            <person name="Brandl J."/>
            <person name="Frisvad J.C."/>
            <person name="Nielsen K.F."/>
            <person name="Lyhne E.K."/>
            <person name="Kogle M.E."/>
            <person name="Kuo A."/>
            <person name="Riley R."/>
            <person name="Clum A."/>
            <person name="Nolan M."/>
            <person name="Lipzen A."/>
            <person name="Salamov A."/>
            <person name="Henrissat B."/>
            <person name="Wiebenga A."/>
            <person name="De vries R.P."/>
            <person name="Grigoriev I.V."/>
            <person name="Mortensen U.H."/>
            <person name="Andersen M.R."/>
            <person name="Baker S.E."/>
        </authorList>
    </citation>
    <scope>NUCLEOTIDE SEQUENCE [LARGE SCALE GENOMIC DNA]</scope>
    <source>
        <strain>CBS 115571</strain>
    </source>
</reference>
<organism>
    <name type="scientific">Aspergillus violaceofuscus (strain CBS 115571)</name>
    <dbReference type="NCBI Taxonomy" id="1450538"/>
    <lineage>
        <taxon>Eukaryota</taxon>
        <taxon>Fungi</taxon>
        <taxon>Dikarya</taxon>
        <taxon>Ascomycota</taxon>
        <taxon>Pezizomycotina</taxon>
        <taxon>Eurotiomycetes</taxon>
        <taxon>Eurotiomycetidae</taxon>
        <taxon>Eurotiales</taxon>
        <taxon>Aspergillaceae</taxon>
        <taxon>Aspergillus</taxon>
    </lineage>
</organism>